<feature type="chain" id="PRO_0000388078" description="Ubiquinone biosynthesis protein COQ4 homolog, mitochondrial">
    <location>
        <begin position="1"/>
        <end position="355"/>
    </location>
</feature>
<feature type="binding site" evidence="1">
    <location>
        <position position="134"/>
    </location>
    <ligand>
        <name>Zn(2+)</name>
        <dbReference type="ChEBI" id="CHEBI:29105"/>
    </ligand>
</feature>
<feature type="binding site" evidence="1">
    <location>
        <position position="135"/>
    </location>
    <ligand>
        <name>Zn(2+)</name>
        <dbReference type="ChEBI" id="CHEBI:29105"/>
    </ligand>
</feature>
<feature type="binding site" evidence="1">
    <location>
        <position position="138"/>
    </location>
    <ligand>
        <name>Zn(2+)</name>
        <dbReference type="ChEBI" id="CHEBI:29105"/>
    </ligand>
</feature>
<feature type="binding site" evidence="1">
    <location>
        <position position="150"/>
    </location>
    <ligand>
        <name>Zn(2+)</name>
        <dbReference type="ChEBI" id="CHEBI:29105"/>
    </ligand>
</feature>
<name>COQ4_PLACU</name>
<organism evidence="3">
    <name type="scientific">Plasmodium chabaudi chabaudi</name>
    <dbReference type="NCBI Taxonomy" id="31271"/>
    <lineage>
        <taxon>Eukaryota</taxon>
        <taxon>Sar</taxon>
        <taxon>Alveolata</taxon>
        <taxon>Apicomplexa</taxon>
        <taxon>Aconoidasida</taxon>
        <taxon>Haemosporida</taxon>
        <taxon>Plasmodiidae</taxon>
        <taxon>Plasmodium</taxon>
        <taxon>Plasmodium (Vinckeia)</taxon>
    </lineage>
</organism>
<sequence>MNNFAKIFQSNWIDLNKLGKLEIFLKTISGIYKAPNRTHLLAHAADISSFYAVKNIYEYMKNDDEGKVILKNKPLLIRQDIQFNELKKLPKNTLGYKYMEFLEAYKLHAHDREAAHFFDDINYSYILTRYRQIHDIGHVVYNLNISIESEAALKMIELIHTKLPITLLAILVAPFMTPLYRFQYIFKDKIPPNFLNPNFDYTYKDDYNYIDELSLKQYVYNLTEYFHIDKIDNNIFFQKLYKYYFDNLNNSNNIRGTIIYGYNNEDNNDIIFDDINNEYIFLKNPEKNYFLFKYKPRQTLLKQLYPWAYMAGMAATKPLHSIHIENWLDKDIDLFRKTYNIIPLPDHLNLMSGIN</sequence>
<dbReference type="EC" id="4.1.1.130" evidence="1"/>
<dbReference type="EMBL" id="LK022886">
    <property type="protein sequence ID" value="VTZ68697.1"/>
    <property type="molecule type" value="Genomic_DNA"/>
</dbReference>
<dbReference type="EMBL" id="LT608175">
    <property type="protein sequence ID" value="SCM21839.1"/>
    <property type="molecule type" value="Genomic_DNA"/>
</dbReference>
<dbReference type="RefSeq" id="XP_016655320.1">
    <property type="nucleotide sequence ID" value="XM_016798062.1"/>
</dbReference>
<dbReference type="EnsemblProtists" id="CDS47008">
    <property type="protein sequence ID" value="CDS47008"/>
    <property type="gene ID" value="PCHAS_090890"/>
</dbReference>
<dbReference type="GeneID" id="3498383"/>
<dbReference type="KEGG" id="pcb:PCHAS_0908900"/>
<dbReference type="VEuPathDB" id="PlasmoDB:PCHAS_0908900"/>
<dbReference type="eggNOG" id="KOG3244">
    <property type="taxonomic scope" value="Eukaryota"/>
</dbReference>
<dbReference type="OrthoDB" id="4249at2759"/>
<dbReference type="UniPathway" id="UPA00232"/>
<dbReference type="Proteomes" id="UP000071118">
    <property type="component" value="Chromosome 9"/>
</dbReference>
<dbReference type="Proteomes" id="UP000507163">
    <property type="component" value="Chromosome 9"/>
</dbReference>
<dbReference type="GO" id="GO:0031314">
    <property type="term" value="C:extrinsic component of mitochondrial inner membrane"/>
    <property type="evidence" value="ECO:0007669"/>
    <property type="project" value="UniProtKB-UniRule"/>
</dbReference>
<dbReference type="GO" id="GO:0006744">
    <property type="term" value="P:ubiquinone biosynthetic process"/>
    <property type="evidence" value="ECO:0007669"/>
    <property type="project" value="UniProtKB-UniRule"/>
</dbReference>
<dbReference type="HAMAP" id="MF_03111">
    <property type="entry name" value="Coq4"/>
    <property type="match status" value="1"/>
</dbReference>
<dbReference type="InterPro" id="IPR007715">
    <property type="entry name" value="Coq4"/>
</dbReference>
<dbReference type="InterPro" id="IPR027540">
    <property type="entry name" value="Coq4_euk"/>
</dbReference>
<dbReference type="PANTHER" id="PTHR12922">
    <property type="entry name" value="UBIQUINONE BIOSYNTHESIS PROTEIN"/>
    <property type="match status" value="1"/>
</dbReference>
<dbReference type="PANTHER" id="PTHR12922:SF7">
    <property type="entry name" value="UBIQUINONE BIOSYNTHESIS PROTEIN COQ4 HOMOLOG, MITOCHONDRIAL"/>
    <property type="match status" value="1"/>
</dbReference>
<dbReference type="Pfam" id="PF05019">
    <property type="entry name" value="Coq4"/>
    <property type="match status" value="1"/>
</dbReference>
<comment type="function">
    <text evidence="1">Lyase that catalyzes the C1-decarboxylation of 4-hydroxy-3-methoxy-5-(all-trans-polyprenyl)benzoic acid into 2-methoxy-6-(all-trans-polyprenyl)phenol during ubiquinone biosynthesis.</text>
</comment>
<comment type="catalytic activity">
    <reaction evidence="1">
        <text>a 4-hydroxy-3-methoxy-5-(all-trans-polyprenyl)benzoate + H(+) = a 2-methoxy-6-(all-trans-polyprenyl)phenol + CO2</text>
        <dbReference type="Rhea" id="RHEA:81179"/>
        <dbReference type="Rhea" id="RHEA-COMP:9551"/>
        <dbReference type="Rhea" id="RHEA-COMP:10931"/>
        <dbReference type="ChEBI" id="CHEBI:15378"/>
        <dbReference type="ChEBI" id="CHEBI:16526"/>
        <dbReference type="ChEBI" id="CHEBI:62731"/>
        <dbReference type="ChEBI" id="CHEBI:84443"/>
        <dbReference type="EC" id="4.1.1.130"/>
    </reaction>
</comment>
<comment type="cofactor">
    <cofactor evidence="1">
        <name>Zn(2+)</name>
        <dbReference type="ChEBI" id="CHEBI:29105"/>
    </cofactor>
</comment>
<comment type="pathway">
    <text evidence="1">Cofactor biosynthesis; ubiquinone biosynthesis.</text>
</comment>
<comment type="subunit">
    <text evidence="1">Component of a multi-subunit COQ enzyme complex.</text>
</comment>
<comment type="subcellular location">
    <subcellularLocation>
        <location evidence="1">Mitochondrion inner membrane</location>
        <topology evidence="1">Peripheral membrane protein</topology>
        <orientation evidence="1">Matrix side</orientation>
    </subcellularLocation>
</comment>
<comment type="miscellaneous">
    <text evidence="1">This protein may be expected to contain an N-terminal transit peptide but none has been predicted.</text>
</comment>
<comment type="similarity">
    <text evidence="1">Belongs to the COQ4 family.</text>
</comment>
<accession>Q4XQW7</accession>
<accession>A0A077XEG5</accession>
<keyword id="KW-0456">Lyase</keyword>
<keyword id="KW-0472">Membrane</keyword>
<keyword id="KW-0479">Metal-binding</keyword>
<keyword id="KW-0496">Mitochondrion</keyword>
<keyword id="KW-0999">Mitochondrion inner membrane</keyword>
<keyword id="KW-0831">Ubiquinone biosynthesis</keyword>
<keyword id="KW-0862">Zinc</keyword>
<reference evidence="3" key="1">
    <citation type="journal article" date="2014" name="BMC Biol.">
        <title>A comprehensive evaluation of rodent malaria parasite genomes and gene expression.</title>
        <authorList>
            <person name="Otto T.D."/>
            <person name="Bohme U."/>
            <person name="Jackson A.P."/>
            <person name="Hunt M."/>
            <person name="Franke-Fayard B."/>
            <person name="Hoeijmakers W.A."/>
            <person name="Religa A.A."/>
            <person name="Robertson L."/>
            <person name="Sanders M."/>
            <person name="Ogun S.A."/>
            <person name="Cunningham D."/>
            <person name="Erhart A."/>
            <person name="Billker O."/>
            <person name="Khan S.M."/>
            <person name="Stunnenberg H.G."/>
            <person name="Langhorne J."/>
            <person name="Holder A.A."/>
            <person name="Waters A.P."/>
            <person name="Newbold C.I."/>
            <person name="Pain A."/>
            <person name="Berriman M."/>
            <person name="Janse C.J."/>
        </authorList>
    </citation>
    <scope>NUCLEOTIDE SEQUENCE [LARGE SCALE GENOMIC DNA]</scope>
    <source>
        <strain evidence="3">AS</strain>
    </source>
</reference>
<reference key="2">
    <citation type="submission" date="2016-08" db="EMBL/GenBank/DDBJ databases">
        <authorList>
            <consortium name="Pathogen Informatics"/>
        </authorList>
    </citation>
    <scope>NUCLEOTIDE SEQUENCE [LARGE SCALE GENOMIC DNA]</scope>
    <source>
        <strain>AJ</strain>
    </source>
</reference>
<proteinExistence type="inferred from homology"/>
<gene>
    <name type="ORF">PC000176.04.0</name>
    <name evidence="2" type="ORF">PCHAS_0908900</name>
</gene>
<protein>
    <recommendedName>
        <fullName evidence="1">Ubiquinone biosynthesis protein COQ4 homolog, mitochondrial</fullName>
    </recommendedName>
    <alternativeName>
        <fullName>4-hydroxy-3-methoxy-5-polyprenylbenzoate decarboxylase</fullName>
        <ecNumber evidence="1">4.1.1.130</ecNumber>
    </alternativeName>
    <alternativeName>
        <fullName evidence="1">Coenzyme Q biosynthesis protein 4 homolog</fullName>
    </alternativeName>
</protein>
<evidence type="ECO:0000255" key="1">
    <source>
        <dbReference type="HAMAP-Rule" id="MF_03111"/>
    </source>
</evidence>
<evidence type="ECO:0000312" key="2">
    <source>
        <dbReference type="EMBL" id="VTZ68697.1"/>
    </source>
</evidence>
<evidence type="ECO:0000312" key="3">
    <source>
        <dbReference type="Proteomes" id="UP000071118"/>
    </source>
</evidence>